<keyword id="KW-0325">Glycoprotein</keyword>
<keyword id="KW-0708">Seed storage protein</keyword>
<keyword id="KW-0732">Signal</keyword>
<keyword id="KW-0758">Storage protein</keyword>
<keyword id="KW-0926">Vacuole</keyword>
<accession>Q43617</accession>
<gene>
    <name type="primary">PHS</name>
</gene>
<comment type="function">
    <text>Major seed storage protein.</text>
</comment>
<comment type="subunit">
    <text evidence="1">Homotrimer.</text>
</comment>
<comment type="subcellular location">
    <subcellularLocation>
        <location evidence="1">Vacuole</location>
        <location evidence="1">Aleurone grain</location>
    </subcellularLocation>
    <subcellularLocation>
        <location evidence="1">Vacuole</location>
    </subcellularLocation>
    <text evidence="1">Cotyledonary membrane-bound vacuolar protein bodies.</text>
</comment>
<comment type="similarity">
    <text evidence="4">Belongs to the 7S seed storage protein family.</text>
</comment>
<protein>
    <recommendedName>
        <fullName>Phaseolin</fullName>
    </recommendedName>
</protein>
<sequence length="423" mass="47514">RRVPLLLLGILFLASLSASFAISLREHNESQDNPFYFSSDNSWQTLFKNQYGHIRVLQRFDQRSERLQNLEDYRLVEFMSKPETLLLPQQADAEFLLVVRSGSALLALVKPGGTIIYSLKQQDTLKIPAGTIFFLINPENNEDLRIIKLAMTVNNPQIQDFFLSSTEAQQSYLYGFSKHILDASFNSPIEKINRLLFAEEGRQEGVIVNIGSDLIQELSRHAKSSSRKSLDHNSLDISNEWGNLTDIVYNSLDVLLTYVEIKEGGLFVPHYNSKAIVILVVEEGVAKVELVGPKREKESLELETYRADVSEGDVFVIPAAFPFAIKAISNVNFTSFGINANNNYRIFLTGKGGPTGKEDNIISAGINPDVLGLMFPGSGEDVQKLFNNQNLSHFVNGSYHKNAHPHEQEQQKQQKGRKGAFVY</sequence>
<organism>
    <name type="scientific">Phaseolus lunatus</name>
    <name type="common">Lima bean</name>
    <name type="synonym">Phaseolus limensis</name>
    <dbReference type="NCBI Taxonomy" id="3884"/>
    <lineage>
        <taxon>Eukaryota</taxon>
        <taxon>Viridiplantae</taxon>
        <taxon>Streptophyta</taxon>
        <taxon>Embryophyta</taxon>
        <taxon>Tracheophyta</taxon>
        <taxon>Spermatophyta</taxon>
        <taxon>Magnoliopsida</taxon>
        <taxon>eudicotyledons</taxon>
        <taxon>Gunneridae</taxon>
        <taxon>Pentapetalae</taxon>
        <taxon>rosids</taxon>
        <taxon>fabids</taxon>
        <taxon>Fabales</taxon>
        <taxon>Fabaceae</taxon>
        <taxon>Papilionoideae</taxon>
        <taxon>50 kb inversion clade</taxon>
        <taxon>NPAAA clade</taxon>
        <taxon>indigoferoid/millettioid clade</taxon>
        <taxon>Phaseoleae</taxon>
        <taxon>Phaseolus</taxon>
    </lineage>
</organism>
<evidence type="ECO:0000250" key="1"/>
<evidence type="ECO:0000255" key="2"/>
<evidence type="ECO:0000256" key="3">
    <source>
        <dbReference type="SAM" id="MobiDB-lite"/>
    </source>
</evidence>
<evidence type="ECO:0000305" key="4"/>
<dbReference type="EMBL" id="U01122">
    <property type="protein sequence ID" value="AAA99533.1"/>
    <property type="molecule type" value="mRNA"/>
</dbReference>
<dbReference type="SMR" id="Q43617"/>
<dbReference type="GlyCosmos" id="Q43617">
    <property type="glycosylation" value="5 sites, No reported glycans"/>
</dbReference>
<dbReference type="GO" id="GO:0033095">
    <property type="term" value="C:aleurone grain"/>
    <property type="evidence" value="ECO:0007669"/>
    <property type="project" value="UniProtKB-SubCell"/>
</dbReference>
<dbReference type="GO" id="GO:0005773">
    <property type="term" value="C:vacuole"/>
    <property type="evidence" value="ECO:0007669"/>
    <property type="project" value="UniProtKB-SubCell"/>
</dbReference>
<dbReference type="GO" id="GO:0045735">
    <property type="term" value="F:nutrient reservoir activity"/>
    <property type="evidence" value="ECO:0007669"/>
    <property type="project" value="UniProtKB-KW"/>
</dbReference>
<dbReference type="CDD" id="cd02245">
    <property type="entry name" value="cupin_7S_vicilin-like_C"/>
    <property type="match status" value="1"/>
</dbReference>
<dbReference type="CDD" id="cd02244">
    <property type="entry name" value="cupin_7S_vicilin-like_N"/>
    <property type="match status" value="1"/>
</dbReference>
<dbReference type="Gene3D" id="2.60.120.10">
    <property type="entry name" value="Jelly Rolls"/>
    <property type="match status" value="2"/>
</dbReference>
<dbReference type="InterPro" id="IPR006045">
    <property type="entry name" value="Cupin_1"/>
</dbReference>
<dbReference type="InterPro" id="IPR014710">
    <property type="entry name" value="RmlC-like_jellyroll"/>
</dbReference>
<dbReference type="InterPro" id="IPR011051">
    <property type="entry name" value="RmlC_Cupin_sf"/>
</dbReference>
<dbReference type="InterPro" id="IPR050253">
    <property type="entry name" value="Seed_Storage-Functional"/>
</dbReference>
<dbReference type="PANTHER" id="PTHR31189">
    <property type="entry name" value="OS03G0336100 PROTEIN-RELATED"/>
    <property type="match status" value="1"/>
</dbReference>
<dbReference type="PANTHER" id="PTHR31189:SF41">
    <property type="entry name" value="VICILIN C72"/>
    <property type="match status" value="1"/>
</dbReference>
<dbReference type="Pfam" id="PF00190">
    <property type="entry name" value="Cupin_1"/>
    <property type="match status" value="1"/>
</dbReference>
<dbReference type="SMART" id="SM00835">
    <property type="entry name" value="Cupin_1"/>
    <property type="match status" value="2"/>
</dbReference>
<dbReference type="SUPFAM" id="SSF51182">
    <property type="entry name" value="RmlC-like cupins"/>
    <property type="match status" value="2"/>
</dbReference>
<name>PHS2_PHALU</name>
<reference key="1">
    <citation type="journal article" date="1994" name="Genome">
        <title>Phaseolin nucleotide sequence diversity in Phaseolus. I. Intraspecific diversity in Phaseolus vulgaris.</title>
        <authorList>
            <person name="Kami J.A."/>
            <person name="Gepts P."/>
        </authorList>
    </citation>
    <scope>NUCLEOTIDE SEQUENCE [MRNA]</scope>
    <source>
        <strain>cv. Henderson</strain>
        <tissue>Cotyledon</tissue>
    </source>
</reference>
<feature type="signal peptide" evidence="2">
    <location>
        <begin position="1" status="less than"/>
        <end position="21"/>
    </location>
</feature>
<feature type="chain" id="PRO_0000032193" description="Phaseolin">
    <location>
        <begin position="22"/>
        <end position="423"/>
    </location>
</feature>
<feature type="domain" description="Cupin type-1 1" evidence="2">
    <location>
        <begin position="35"/>
        <end position="193"/>
    </location>
</feature>
<feature type="domain" description="Cupin type-1 2" evidence="2">
    <location>
        <begin position="228"/>
        <end position="383"/>
    </location>
</feature>
<feature type="region of interest" description="Disordered" evidence="3">
    <location>
        <begin position="397"/>
        <end position="423"/>
    </location>
</feature>
<feature type="compositionally biased region" description="Basic residues" evidence="3">
    <location>
        <begin position="414"/>
        <end position="423"/>
    </location>
</feature>
<feature type="glycosylation site" description="N-linked (GlcNAc...) asparagine" evidence="2">
    <location>
        <position position="28"/>
    </location>
</feature>
<feature type="glycosylation site" description="N-linked (GlcNAc...) asparagine" evidence="2">
    <location>
        <position position="243"/>
    </location>
</feature>
<feature type="glycosylation site" description="N-linked (GlcNAc...) asparagine" evidence="2">
    <location>
        <position position="332"/>
    </location>
</feature>
<feature type="glycosylation site" description="N-linked (GlcNAc...) asparagine" evidence="2">
    <location>
        <position position="390"/>
    </location>
</feature>
<feature type="glycosylation site" description="N-linked (GlcNAc...) asparagine" evidence="2">
    <location>
        <position position="396"/>
    </location>
</feature>
<feature type="non-terminal residue">
    <location>
        <position position="1"/>
    </location>
</feature>
<proteinExistence type="evidence at transcript level"/>